<comment type="function">
    <text evidence="1">Catalyzes a reversible aldol reaction between acetaldehyde and D-glyceraldehyde 3-phosphate to generate 2-deoxy-D-ribose 5-phosphate.</text>
</comment>
<comment type="catalytic activity">
    <reaction evidence="1">
        <text>2-deoxy-D-ribose 5-phosphate = D-glyceraldehyde 3-phosphate + acetaldehyde</text>
        <dbReference type="Rhea" id="RHEA:12821"/>
        <dbReference type="ChEBI" id="CHEBI:15343"/>
        <dbReference type="ChEBI" id="CHEBI:59776"/>
        <dbReference type="ChEBI" id="CHEBI:62877"/>
        <dbReference type="EC" id="4.1.2.4"/>
    </reaction>
</comment>
<comment type="pathway">
    <text evidence="1">Carbohydrate degradation; 2-deoxy-D-ribose 1-phosphate degradation; D-glyceraldehyde 3-phosphate and acetaldehyde from 2-deoxy-alpha-D-ribose 1-phosphate: step 2/2.</text>
</comment>
<comment type="subcellular location">
    <subcellularLocation>
        <location evidence="1">Cytoplasm</location>
    </subcellularLocation>
</comment>
<comment type="miscellaneous">
    <text>Was identified as a high-confidence drug target.</text>
</comment>
<comment type="similarity">
    <text evidence="1 2">Belongs to the DeoC/FbaB aldolase family. DeoC type 1 subfamily.</text>
</comment>
<accession>P9WP03</accession>
<accession>L0T6T1</accession>
<accession>P63929</accession>
<accession>Q11138</accession>
<dbReference type="EC" id="4.1.2.4" evidence="1"/>
<dbReference type="EMBL" id="AL123456">
    <property type="protein sequence ID" value="CCP43212.1"/>
    <property type="molecule type" value="Genomic_DNA"/>
</dbReference>
<dbReference type="PIR" id="A70743">
    <property type="entry name" value="A70743"/>
</dbReference>
<dbReference type="RefSeq" id="NP_214992.1">
    <property type="nucleotide sequence ID" value="NC_000962.3"/>
</dbReference>
<dbReference type="RefSeq" id="WP_003402347.1">
    <property type="nucleotide sequence ID" value="NZ_NVQJ01000002.1"/>
</dbReference>
<dbReference type="SMR" id="P9WP03"/>
<dbReference type="FunCoup" id="P9WP03">
    <property type="interactions" value="342"/>
</dbReference>
<dbReference type="STRING" id="83332.Rv0478"/>
<dbReference type="PaxDb" id="83332-Rv0478"/>
<dbReference type="DNASU" id="888425"/>
<dbReference type="GeneID" id="888425"/>
<dbReference type="KEGG" id="mtu:Rv0478"/>
<dbReference type="KEGG" id="mtv:RVBD_0478"/>
<dbReference type="TubercuList" id="Rv0478"/>
<dbReference type="eggNOG" id="COG0274">
    <property type="taxonomic scope" value="Bacteria"/>
</dbReference>
<dbReference type="InParanoid" id="P9WP03"/>
<dbReference type="OrthoDB" id="6579831at2"/>
<dbReference type="PhylomeDB" id="P9WP03"/>
<dbReference type="UniPathway" id="UPA00002">
    <property type="reaction ID" value="UER00468"/>
</dbReference>
<dbReference type="Proteomes" id="UP000001584">
    <property type="component" value="Chromosome"/>
</dbReference>
<dbReference type="GO" id="GO:0005737">
    <property type="term" value="C:cytoplasm"/>
    <property type="evidence" value="ECO:0007669"/>
    <property type="project" value="UniProtKB-SubCell"/>
</dbReference>
<dbReference type="GO" id="GO:0004139">
    <property type="term" value="F:deoxyribose-phosphate aldolase activity"/>
    <property type="evidence" value="ECO:0000318"/>
    <property type="project" value="GO_Central"/>
</dbReference>
<dbReference type="GO" id="GO:0006018">
    <property type="term" value="P:2-deoxyribose 1-phosphate catabolic process"/>
    <property type="evidence" value="ECO:0007669"/>
    <property type="project" value="UniProtKB-UniRule"/>
</dbReference>
<dbReference type="GO" id="GO:0016052">
    <property type="term" value="P:carbohydrate catabolic process"/>
    <property type="evidence" value="ECO:0000318"/>
    <property type="project" value="GO_Central"/>
</dbReference>
<dbReference type="GO" id="GO:0009264">
    <property type="term" value="P:deoxyribonucleotide catabolic process"/>
    <property type="evidence" value="ECO:0000318"/>
    <property type="project" value="GO_Central"/>
</dbReference>
<dbReference type="CDD" id="cd00959">
    <property type="entry name" value="DeoC"/>
    <property type="match status" value="1"/>
</dbReference>
<dbReference type="FunFam" id="3.20.20.70:FF:000044">
    <property type="entry name" value="Deoxyribose-phosphate aldolase"/>
    <property type="match status" value="1"/>
</dbReference>
<dbReference type="Gene3D" id="3.20.20.70">
    <property type="entry name" value="Aldolase class I"/>
    <property type="match status" value="1"/>
</dbReference>
<dbReference type="HAMAP" id="MF_00114">
    <property type="entry name" value="DeoC_type1"/>
    <property type="match status" value="1"/>
</dbReference>
<dbReference type="InterPro" id="IPR013785">
    <property type="entry name" value="Aldolase_TIM"/>
</dbReference>
<dbReference type="InterPro" id="IPR011343">
    <property type="entry name" value="DeoC"/>
</dbReference>
<dbReference type="InterPro" id="IPR002915">
    <property type="entry name" value="DeoC/FbaB/LacD_aldolase"/>
</dbReference>
<dbReference type="InterPro" id="IPR028581">
    <property type="entry name" value="DeoC_typeI"/>
</dbReference>
<dbReference type="NCBIfam" id="TIGR00126">
    <property type="entry name" value="deoC"/>
    <property type="match status" value="1"/>
</dbReference>
<dbReference type="PANTHER" id="PTHR10889">
    <property type="entry name" value="DEOXYRIBOSE-PHOSPHATE ALDOLASE"/>
    <property type="match status" value="1"/>
</dbReference>
<dbReference type="PANTHER" id="PTHR10889:SF1">
    <property type="entry name" value="DEOXYRIBOSE-PHOSPHATE ALDOLASE"/>
    <property type="match status" value="1"/>
</dbReference>
<dbReference type="Pfam" id="PF01791">
    <property type="entry name" value="DeoC"/>
    <property type="match status" value="1"/>
</dbReference>
<dbReference type="PIRSF" id="PIRSF001357">
    <property type="entry name" value="DeoC"/>
    <property type="match status" value="1"/>
</dbReference>
<dbReference type="SMART" id="SM01133">
    <property type="entry name" value="DeoC"/>
    <property type="match status" value="1"/>
</dbReference>
<dbReference type="SUPFAM" id="SSF51569">
    <property type="entry name" value="Aldolase"/>
    <property type="match status" value="1"/>
</dbReference>
<gene>
    <name evidence="1" type="primary">deoC</name>
    <name type="ordered locus">Rv0478</name>
    <name type="ORF">MTCY20G9.04</name>
</gene>
<proteinExistence type="evidence at protein level"/>
<organism>
    <name type="scientific">Mycobacterium tuberculosis (strain ATCC 25618 / H37Rv)</name>
    <dbReference type="NCBI Taxonomy" id="83332"/>
    <lineage>
        <taxon>Bacteria</taxon>
        <taxon>Bacillati</taxon>
        <taxon>Actinomycetota</taxon>
        <taxon>Actinomycetes</taxon>
        <taxon>Mycobacteriales</taxon>
        <taxon>Mycobacteriaceae</taxon>
        <taxon>Mycobacterium</taxon>
        <taxon>Mycobacterium tuberculosis complex</taxon>
    </lineage>
</organism>
<name>DEOC_MYCTU</name>
<evidence type="ECO:0000255" key="1">
    <source>
        <dbReference type="HAMAP-Rule" id="MF_00114"/>
    </source>
</evidence>
<evidence type="ECO:0000305" key="2"/>
<feature type="chain" id="PRO_0000057248" description="Deoxyribose-phosphate aldolase">
    <location>
        <begin position="1"/>
        <end position="224"/>
    </location>
</feature>
<feature type="active site" description="Proton donor/acceptor" evidence="1">
    <location>
        <position position="93"/>
    </location>
</feature>
<feature type="active site" description="Schiff-base intermediate with acetaldehyde" evidence="1">
    <location>
        <position position="159"/>
    </location>
</feature>
<feature type="active site" description="Proton donor/acceptor" evidence="1">
    <location>
        <position position="189"/>
    </location>
</feature>
<keyword id="KW-0963">Cytoplasm</keyword>
<keyword id="KW-0456">Lyase</keyword>
<keyword id="KW-1185">Reference proteome</keyword>
<keyword id="KW-0704">Schiff base</keyword>
<reference key="1">
    <citation type="journal article" date="1998" name="Nature">
        <title>Deciphering the biology of Mycobacterium tuberculosis from the complete genome sequence.</title>
        <authorList>
            <person name="Cole S.T."/>
            <person name="Brosch R."/>
            <person name="Parkhill J."/>
            <person name="Garnier T."/>
            <person name="Churcher C.M."/>
            <person name="Harris D.E."/>
            <person name="Gordon S.V."/>
            <person name="Eiglmeier K."/>
            <person name="Gas S."/>
            <person name="Barry C.E. III"/>
            <person name="Tekaia F."/>
            <person name="Badcock K."/>
            <person name="Basham D."/>
            <person name="Brown D."/>
            <person name="Chillingworth T."/>
            <person name="Connor R."/>
            <person name="Davies R.M."/>
            <person name="Devlin K."/>
            <person name="Feltwell T."/>
            <person name="Gentles S."/>
            <person name="Hamlin N."/>
            <person name="Holroyd S."/>
            <person name="Hornsby T."/>
            <person name="Jagels K."/>
            <person name="Krogh A."/>
            <person name="McLean J."/>
            <person name="Moule S."/>
            <person name="Murphy L.D."/>
            <person name="Oliver S."/>
            <person name="Osborne J."/>
            <person name="Quail M.A."/>
            <person name="Rajandream M.A."/>
            <person name="Rogers J."/>
            <person name="Rutter S."/>
            <person name="Seeger K."/>
            <person name="Skelton S."/>
            <person name="Squares S."/>
            <person name="Squares R."/>
            <person name="Sulston J.E."/>
            <person name="Taylor K."/>
            <person name="Whitehead S."/>
            <person name="Barrell B.G."/>
        </authorList>
    </citation>
    <scope>NUCLEOTIDE SEQUENCE [LARGE SCALE GENOMIC DNA]</scope>
    <source>
        <strain>ATCC 25618 / H37Rv</strain>
    </source>
</reference>
<reference key="2">
    <citation type="journal article" date="2008" name="BMC Syst. Biol.">
        <title>targetTB: a target identification pipeline for Mycobacterium tuberculosis through an interactome, reactome and genome-scale structural analysis.</title>
        <authorList>
            <person name="Raman K."/>
            <person name="Yeturu K."/>
            <person name="Chandra N."/>
        </authorList>
    </citation>
    <scope>IDENTIFICATION AS A DRUG TARGET [LARGE SCALE ANALYSIS]</scope>
</reference>
<reference key="3">
    <citation type="journal article" date="2011" name="Mol. Cell. Proteomics">
        <title>Proteogenomic analysis of Mycobacterium tuberculosis by high resolution mass spectrometry.</title>
        <authorList>
            <person name="Kelkar D.S."/>
            <person name="Kumar D."/>
            <person name="Kumar P."/>
            <person name="Balakrishnan L."/>
            <person name="Muthusamy B."/>
            <person name="Yadav A.K."/>
            <person name="Shrivastava P."/>
            <person name="Marimuthu A."/>
            <person name="Anand S."/>
            <person name="Sundaram H."/>
            <person name="Kingsbury R."/>
            <person name="Harsha H.C."/>
            <person name="Nair B."/>
            <person name="Prasad T.S."/>
            <person name="Chauhan D.S."/>
            <person name="Katoch K."/>
            <person name="Katoch V.M."/>
            <person name="Kumar P."/>
            <person name="Chaerkady R."/>
            <person name="Ramachandran S."/>
            <person name="Dash D."/>
            <person name="Pandey A."/>
        </authorList>
    </citation>
    <scope>IDENTIFICATION BY MASS SPECTROMETRY [LARGE SCALE ANALYSIS]</scope>
    <source>
        <strain>ATCC 25618 / H37Rv</strain>
    </source>
</reference>
<sequence length="224" mass="22068">MLGQPTRAQLAALVDHTLLKPETTRADVAALVAEAAELGVYAVCVSPSMVPVAVQAGGVRVAAVTGFPSGKHVSSVKAHEAAAALASGASEIDMVIDIGAALCGDIDAVRSDIEAVRAAAAGAVLKVIVESAVLLGQSNAHTLVDACRAAEDAGADFVKTSTGCHPAGGATVRAVELMAETVGPRLGVKASGGIRTAADAVAMLNAGATRLGLSGTRAVLDGLS</sequence>
<protein>
    <recommendedName>
        <fullName evidence="1">Deoxyribose-phosphate aldolase</fullName>
        <shortName evidence="1">DERA</shortName>
        <ecNumber evidence="1">4.1.2.4</ecNumber>
    </recommendedName>
    <alternativeName>
        <fullName evidence="1">2-deoxy-D-ribose 5-phosphate aldolase</fullName>
    </alternativeName>
    <alternativeName>
        <fullName evidence="1">Phosphodeoxyriboaldolase</fullName>
        <shortName evidence="1">Deoxyriboaldolase</shortName>
    </alternativeName>
</protein>